<proteinExistence type="evidence at protein level"/>
<reference key="1">
    <citation type="journal article" date="2004" name="Nat. Genet.">
        <title>Complete sequencing and characterization of 21,243 full-length human cDNAs.</title>
        <authorList>
            <person name="Ota T."/>
            <person name="Suzuki Y."/>
            <person name="Nishikawa T."/>
            <person name="Otsuki T."/>
            <person name="Sugiyama T."/>
            <person name="Irie R."/>
            <person name="Wakamatsu A."/>
            <person name="Hayashi K."/>
            <person name="Sato H."/>
            <person name="Nagai K."/>
            <person name="Kimura K."/>
            <person name="Makita H."/>
            <person name="Sekine M."/>
            <person name="Obayashi M."/>
            <person name="Nishi T."/>
            <person name="Shibahara T."/>
            <person name="Tanaka T."/>
            <person name="Ishii S."/>
            <person name="Yamamoto J."/>
            <person name="Saito K."/>
            <person name="Kawai Y."/>
            <person name="Isono Y."/>
            <person name="Nakamura Y."/>
            <person name="Nagahari K."/>
            <person name="Murakami K."/>
            <person name="Yasuda T."/>
            <person name="Iwayanagi T."/>
            <person name="Wagatsuma M."/>
            <person name="Shiratori A."/>
            <person name="Sudo H."/>
            <person name="Hosoiri T."/>
            <person name="Kaku Y."/>
            <person name="Kodaira H."/>
            <person name="Kondo H."/>
            <person name="Sugawara M."/>
            <person name="Takahashi M."/>
            <person name="Kanda K."/>
            <person name="Yokoi T."/>
            <person name="Furuya T."/>
            <person name="Kikkawa E."/>
            <person name="Omura Y."/>
            <person name="Abe K."/>
            <person name="Kamihara K."/>
            <person name="Katsuta N."/>
            <person name="Sato K."/>
            <person name="Tanikawa M."/>
            <person name="Yamazaki M."/>
            <person name="Ninomiya K."/>
            <person name="Ishibashi T."/>
            <person name="Yamashita H."/>
            <person name="Murakawa K."/>
            <person name="Fujimori K."/>
            <person name="Tanai H."/>
            <person name="Kimata M."/>
            <person name="Watanabe M."/>
            <person name="Hiraoka S."/>
            <person name="Chiba Y."/>
            <person name="Ishida S."/>
            <person name="Ono Y."/>
            <person name="Takiguchi S."/>
            <person name="Watanabe S."/>
            <person name="Yosida M."/>
            <person name="Hotuta T."/>
            <person name="Kusano J."/>
            <person name="Kanehori K."/>
            <person name="Takahashi-Fujii A."/>
            <person name="Hara H."/>
            <person name="Tanase T.-O."/>
            <person name="Nomura Y."/>
            <person name="Togiya S."/>
            <person name="Komai F."/>
            <person name="Hara R."/>
            <person name="Takeuchi K."/>
            <person name="Arita M."/>
            <person name="Imose N."/>
            <person name="Musashino K."/>
            <person name="Yuuki H."/>
            <person name="Oshima A."/>
            <person name="Sasaki N."/>
            <person name="Aotsuka S."/>
            <person name="Yoshikawa Y."/>
            <person name="Matsunawa H."/>
            <person name="Ichihara T."/>
            <person name="Shiohata N."/>
            <person name="Sano S."/>
            <person name="Moriya S."/>
            <person name="Momiyama H."/>
            <person name="Satoh N."/>
            <person name="Takami S."/>
            <person name="Terashima Y."/>
            <person name="Suzuki O."/>
            <person name="Nakagawa S."/>
            <person name="Senoh A."/>
            <person name="Mizoguchi H."/>
            <person name="Goto Y."/>
            <person name="Shimizu F."/>
            <person name="Wakebe H."/>
            <person name="Hishigaki H."/>
            <person name="Watanabe T."/>
            <person name="Sugiyama A."/>
            <person name="Takemoto M."/>
            <person name="Kawakami B."/>
            <person name="Yamazaki M."/>
            <person name="Watanabe K."/>
            <person name="Kumagai A."/>
            <person name="Itakura S."/>
            <person name="Fukuzumi Y."/>
            <person name="Fujimori Y."/>
            <person name="Komiyama M."/>
            <person name="Tashiro H."/>
            <person name="Tanigami A."/>
            <person name="Fujiwara T."/>
            <person name="Ono T."/>
            <person name="Yamada K."/>
            <person name="Fujii Y."/>
            <person name="Ozaki K."/>
            <person name="Hirao M."/>
            <person name="Ohmori Y."/>
            <person name="Kawabata A."/>
            <person name="Hikiji T."/>
            <person name="Kobatake N."/>
            <person name="Inagaki H."/>
            <person name="Ikema Y."/>
            <person name="Okamoto S."/>
            <person name="Okitani R."/>
            <person name="Kawakami T."/>
            <person name="Noguchi S."/>
            <person name="Itoh T."/>
            <person name="Shigeta K."/>
            <person name="Senba T."/>
            <person name="Matsumura K."/>
            <person name="Nakajima Y."/>
            <person name="Mizuno T."/>
            <person name="Morinaga M."/>
            <person name="Sasaki M."/>
            <person name="Togashi T."/>
            <person name="Oyama M."/>
            <person name="Hata H."/>
            <person name="Watanabe M."/>
            <person name="Komatsu T."/>
            <person name="Mizushima-Sugano J."/>
            <person name="Satoh T."/>
            <person name="Shirai Y."/>
            <person name="Takahashi Y."/>
            <person name="Nakagawa K."/>
            <person name="Okumura K."/>
            <person name="Nagase T."/>
            <person name="Nomura N."/>
            <person name="Kikuchi H."/>
            <person name="Masuho Y."/>
            <person name="Yamashita R."/>
            <person name="Nakai K."/>
            <person name="Yada T."/>
            <person name="Nakamura Y."/>
            <person name="Ohara O."/>
            <person name="Isogai T."/>
            <person name="Sugano S."/>
        </authorList>
    </citation>
    <scope>NUCLEOTIDE SEQUENCE [LARGE SCALE MRNA] (ISOFORM 1)</scope>
    <scope>VARIANT ARG-349</scope>
    <source>
        <tissue>Placenta</tissue>
    </source>
</reference>
<reference key="2">
    <citation type="submission" date="2006-07" db="EMBL/GenBank/DDBJ databases">
        <authorList>
            <person name="Suzuki Y."/>
            <person name="Sugano S."/>
            <person name="Totoki Y."/>
            <person name="Toyoda A."/>
            <person name="Takeda T."/>
            <person name="Sakaki Y."/>
            <person name="Tanaka A."/>
            <person name="Yokoyama S."/>
        </authorList>
    </citation>
    <scope>NUCLEOTIDE SEQUENCE [LARGE SCALE MRNA] (ISOFORM 2)</scope>
    <source>
        <tissue>Hepatoma</tissue>
    </source>
</reference>
<reference key="3">
    <citation type="journal article" date="2004" name="Nature">
        <title>The DNA sequence and comparative analysis of human chromosome 5.</title>
        <authorList>
            <person name="Schmutz J."/>
            <person name="Martin J."/>
            <person name="Terry A."/>
            <person name="Couronne O."/>
            <person name="Grimwood J."/>
            <person name="Lowry S."/>
            <person name="Gordon L.A."/>
            <person name="Scott D."/>
            <person name="Xie G."/>
            <person name="Huang W."/>
            <person name="Hellsten U."/>
            <person name="Tran-Gyamfi M."/>
            <person name="She X."/>
            <person name="Prabhakar S."/>
            <person name="Aerts A."/>
            <person name="Altherr M."/>
            <person name="Bajorek E."/>
            <person name="Black S."/>
            <person name="Branscomb E."/>
            <person name="Caoile C."/>
            <person name="Challacombe J.F."/>
            <person name="Chan Y.M."/>
            <person name="Denys M."/>
            <person name="Detter J.C."/>
            <person name="Escobar J."/>
            <person name="Flowers D."/>
            <person name="Fotopulos D."/>
            <person name="Glavina T."/>
            <person name="Gomez M."/>
            <person name="Gonzales E."/>
            <person name="Goodstein D."/>
            <person name="Grigoriev I."/>
            <person name="Groza M."/>
            <person name="Hammon N."/>
            <person name="Hawkins T."/>
            <person name="Haydu L."/>
            <person name="Israni S."/>
            <person name="Jett J."/>
            <person name="Kadner K."/>
            <person name="Kimball H."/>
            <person name="Kobayashi A."/>
            <person name="Lopez F."/>
            <person name="Lou Y."/>
            <person name="Martinez D."/>
            <person name="Medina C."/>
            <person name="Morgan J."/>
            <person name="Nandkeshwar R."/>
            <person name="Noonan J.P."/>
            <person name="Pitluck S."/>
            <person name="Pollard M."/>
            <person name="Predki P."/>
            <person name="Priest J."/>
            <person name="Ramirez L."/>
            <person name="Retterer J."/>
            <person name="Rodriguez A."/>
            <person name="Rogers S."/>
            <person name="Salamov A."/>
            <person name="Salazar A."/>
            <person name="Thayer N."/>
            <person name="Tice H."/>
            <person name="Tsai M."/>
            <person name="Ustaszewska A."/>
            <person name="Vo N."/>
            <person name="Wheeler J."/>
            <person name="Wu K."/>
            <person name="Yang J."/>
            <person name="Dickson M."/>
            <person name="Cheng J.-F."/>
            <person name="Eichler E.E."/>
            <person name="Olsen A."/>
            <person name="Pennacchio L.A."/>
            <person name="Rokhsar D.S."/>
            <person name="Richardson P."/>
            <person name="Lucas S.M."/>
            <person name="Myers R.M."/>
            <person name="Rubin E.M."/>
        </authorList>
    </citation>
    <scope>NUCLEOTIDE SEQUENCE [LARGE SCALE GENOMIC DNA]</scope>
</reference>
<reference key="4">
    <citation type="journal article" date="2004" name="Genome Res.">
        <title>The status, quality, and expansion of the NIH full-length cDNA project: the Mammalian Gene Collection (MGC).</title>
        <authorList>
            <consortium name="The MGC Project Team"/>
        </authorList>
    </citation>
    <scope>NUCLEOTIDE SEQUENCE [LARGE SCALE MRNA] (ISOFORM 1)</scope>
    <scope>VARIANT TYR-144</scope>
    <source>
        <tissue>Placenta</tissue>
    </source>
</reference>
<reference key="5">
    <citation type="journal article" date="2005" name="EMBO J.">
        <title>Nuclear export and cytoplasmic processing of precursors to the 40S ribosomal subunits in mammalian cells.</title>
        <authorList>
            <person name="Rouquette J."/>
            <person name="Choesmel V."/>
            <person name="Gleizes P.E."/>
        </authorList>
    </citation>
    <scope>FUNCTION</scope>
    <scope>SUBCELLULAR LOCATION</scope>
    <scope>SUBUNIT</scope>
</reference>
<reference key="6">
    <citation type="journal article" date="2006" name="Cell">
        <title>Global, in vivo, and site-specific phosphorylation dynamics in signaling networks.</title>
        <authorList>
            <person name="Olsen J.V."/>
            <person name="Blagoev B."/>
            <person name="Gnad F."/>
            <person name="Macek B."/>
            <person name="Kumar C."/>
            <person name="Mortensen P."/>
            <person name="Mann M."/>
        </authorList>
    </citation>
    <scope>PHOSPHORYLATION [LARGE SCALE ANALYSIS] AT SER-390</scope>
    <scope>IDENTIFICATION BY MASS SPECTROMETRY [LARGE SCALE ANALYSIS]</scope>
    <source>
        <tissue>Cervix carcinoma</tissue>
    </source>
</reference>
<reference key="7">
    <citation type="journal article" date="2008" name="Mol. Cell">
        <title>Kinase-selective enrichment enables quantitative phosphoproteomics of the kinome across the cell cycle.</title>
        <authorList>
            <person name="Daub H."/>
            <person name="Olsen J.V."/>
            <person name="Bairlein M."/>
            <person name="Gnad F."/>
            <person name="Oppermann F.S."/>
            <person name="Korner R."/>
            <person name="Greff Z."/>
            <person name="Keri G."/>
            <person name="Stemmann O."/>
            <person name="Mann M."/>
        </authorList>
    </citation>
    <scope>PHOSPHORYLATION [LARGE SCALE ANALYSIS] AT SER-332; SER-335; SER-337; SER-390; SER-417 AND SER-442</scope>
    <scope>IDENTIFICATION BY MASS SPECTROMETRY [LARGE SCALE ANALYSIS]</scope>
    <source>
        <tissue>Cervix carcinoma</tissue>
    </source>
</reference>
<reference key="8">
    <citation type="journal article" date="2008" name="Proc. Natl. Acad. Sci. U.S.A.">
        <title>A quantitative atlas of mitotic phosphorylation.</title>
        <authorList>
            <person name="Dephoure N."/>
            <person name="Zhou C."/>
            <person name="Villen J."/>
            <person name="Beausoleil S.A."/>
            <person name="Bakalarski C.E."/>
            <person name="Elledge S.J."/>
            <person name="Gygi S.P."/>
        </authorList>
    </citation>
    <scope>PHOSPHORYLATION [LARGE SCALE ANALYSIS] AT SER-350; SER-380; SER-382; SER-385 AND SER-442</scope>
    <scope>IDENTIFICATION BY MASS SPECTROMETRY [LARGE SCALE ANALYSIS]</scope>
    <source>
        <tissue>Cervix carcinoma</tissue>
    </source>
</reference>
<reference key="9">
    <citation type="journal article" date="2009" name="Anal. Chem.">
        <title>Lys-N and trypsin cover complementary parts of the phosphoproteome in a refined SCX-based approach.</title>
        <authorList>
            <person name="Gauci S."/>
            <person name="Helbig A.O."/>
            <person name="Slijper M."/>
            <person name="Krijgsveld J."/>
            <person name="Heck A.J."/>
            <person name="Mohammed S."/>
        </authorList>
    </citation>
    <scope>IDENTIFICATION BY MASS SPECTROMETRY [LARGE SCALE ANALYSIS]</scope>
</reference>
<reference key="10">
    <citation type="journal article" date="2009" name="J. Cell Biol.">
        <title>Distinct cytoplasmic maturation steps of 40S ribosomal subunit precursors require hRio2.</title>
        <authorList>
            <person name="Zemp I."/>
            <person name="Wild T."/>
            <person name="O'Donohue M.F."/>
            <person name="Wandrey F."/>
            <person name="Widmann B."/>
            <person name="Gleizes P.E."/>
            <person name="Kutay U."/>
        </authorList>
    </citation>
    <scope>FUNCTION</scope>
    <scope>SUBUNIT</scope>
    <scope>SUBCELLULAR LOCATION</scope>
    <scope>NUCLEAR EXPORT SIGNAL</scope>
    <scope>PHOSPHORYLATION</scope>
    <scope>MUTAGENESIS OF LYS-123; ASP-246; LEU-400 AND ILE-403</scope>
</reference>
<reference key="11">
    <citation type="journal article" date="2009" name="Mol. Cell. Proteomics">
        <title>Large-scale proteomics analysis of the human kinome.</title>
        <authorList>
            <person name="Oppermann F.S."/>
            <person name="Gnad F."/>
            <person name="Olsen J.V."/>
            <person name="Hornberger R."/>
            <person name="Greff Z."/>
            <person name="Keri G."/>
            <person name="Mann M."/>
            <person name="Daub H."/>
        </authorList>
    </citation>
    <scope>PHOSPHORYLATION [LARGE SCALE ANALYSIS] AT SER-332; SER-335; SER-337; SER-362; SER-385; SER-390; SER-442 AND TYR-445</scope>
    <scope>IDENTIFICATION BY MASS SPECTROMETRY [LARGE SCALE ANALYSIS]</scope>
</reference>
<reference key="12">
    <citation type="journal article" date="2009" name="Sci. Signal.">
        <title>Quantitative phosphoproteomic analysis of T cell receptor signaling reveals system-wide modulation of protein-protein interactions.</title>
        <authorList>
            <person name="Mayya V."/>
            <person name="Lundgren D.H."/>
            <person name="Hwang S.-I."/>
            <person name="Rezaul K."/>
            <person name="Wu L."/>
            <person name="Eng J.K."/>
            <person name="Rodionov V."/>
            <person name="Han D.K."/>
        </authorList>
    </citation>
    <scope>PHOSPHORYLATION [LARGE SCALE ANALYSIS] AT SER-332; SER-335; SER-337; SER-380; SER-382; SER-385 AND SER-390</scope>
    <scope>IDENTIFICATION BY MASS SPECTROMETRY [LARGE SCALE ANALYSIS]</scope>
    <source>
        <tissue>Leukemic T-cell</tissue>
    </source>
</reference>
<reference key="13">
    <citation type="journal article" date="2010" name="Sci. Signal.">
        <title>Quantitative phosphoproteomics reveals widespread full phosphorylation site occupancy during mitosis.</title>
        <authorList>
            <person name="Olsen J.V."/>
            <person name="Vermeulen M."/>
            <person name="Santamaria A."/>
            <person name="Kumar C."/>
            <person name="Miller M.L."/>
            <person name="Jensen L.J."/>
            <person name="Gnad F."/>
            <person name="Cox J."/>
            <person name="Jensen T.S."/>
            <person name="Nigg E.A."/>
            <person name="Brunak S."/>
            <person name="Mann M."/>
        </authorList>
    </citation>
    <scope>PHOSPHORYLATION [LARGE SCALE ANALYSIS] AT SER-332; SER-335; SER-337 AND SER-412</scope>
    <scope>IDENTIFICATION BY MASS SPECTROMETRY [LARGE SCALE ANALYSIS]</scope>
    <source>
        <tissue>Cervix carcinoma</tissue>
    </source>
</reference>
<reference key="14">
    <citation type="journal article" date="2011" name="BMC Syst. Biol.">
        <title>Initial characterization of the human central proteome.</title>
        <authorList>
            <person name="Burkard T.R."/>
            <person name="Planyavsky M."/>
            <person name="Kaupe I."/>
            <person name="Breitwieser F.P."/>
            <person name="Buerckstuemmer T."/>
            <person name="Bennett K.L."/>
            <person name="Superti-Furga G."/>
            <person name="Colinge J."/>
        </authorList>
    </citation>
    <scope>IDENTIFICATION BY MASS SPECTROMETRY [LARGE SCALE ANALYSIS]</scope>
</reference>
<reference key="15">
    <citation type="journal article" date="2011" name="J. Biol. Chem.">
        <title>RioK1, a new interactor of protein arginine methyltransferase 5 (PRMT5), competes with pICln for binding and modulates PRMT5 complex composition and substrate specificity.</title>
        <authorList>
            <person name="Guderian G."/>
            <person name="Peter C."/>
            <person name="Wiesner J."/>
            <person name="Sickmann A."/>
            <person name="Schulze-Osthoff K."/>
            <person name="Fischer U."/>
            <person name="Grimmler M."/>
        </authorList>
    </citation>
    <scope>SUBUNIT</scope>
</reference>
<reference key="16">
    <citation type="journal article" date="2011" name="J. Biol. Chem.">
        <title>Phosphorylation of right open reading frame 2 (Rio2) protein kinase by polo-like kinase 1 regulates mitotic progression.</title>
        <authorList>
            <person name="Liu T."/>
            <person name="Deng M."/>
            <person name="Li J."/>
            <person name="Tong X."/>
            <person name="Wei Q."/>
            <person name="Ye X."/>
        </authorList>
    </citation>
    <scope>PHOSPHORYLATION AT SER-335; SER-380 AND SER-548 BY PLK1</scope>
    <scope>FUNCTION</scope>
    <scope>CATALYTIC ACTIVITY</scope>
    <scope>MUTAGENESIS OF SER-335; SER-380 AND SER-548</scope>
    <scope>INTERACTION WITH PLK1</scope>
</reference>
<reference key="17">
    <citation type="journal article" date="2011" name="Sci. Signal.">
        <title>System-wide temporal characterization of the proteome and phosphoproteome of human embryonic stem cell differentiation.</title>
        <authorList>
            <person name="Rigbolt K.T."/>
            <person name="Prokhorova T.A."/>
            <person name="Akimov V."/>
            <person name="Henningsen J."/>
            <person name="Johansen P.T."/>
            <person name="Kratchmarova I."/>
            <person name="Kassem M."/>
            <person name="Mann M."/>
            <person name="Olsen J.V."/>
            <person name="Blagoev B."/>
        </authorList>
    </citation>
    <scope>PHOSPHORYLATION [LARGE SCALE ANALYSIS] AT SER-337</scope>
    <scope>IDENTIFICATION BY MASS SPECTROMETRY [LARGE SCALE ANALYSIS]</scope>
</reference>
<reference key="18">
    <citation type="journal article" date="2012" name="Proc. Natl. Acad. Sci. U.S.A.">
        <title>N-terminal acetylome analyses and functional insights of the N-terminal acetyltransferase NatB.</title>
        <authorList>
            <person name="Van Damme P."/>
            <person name="Lasa M."/>
            <person name="Polevoda B."/>
            <person name="Gazquez C."/>
            <person name="Elosegui-Artola A."/>
            <person name="Kim D.S."/>
            <person name="De Juan-Pardo E."/>
            <person name="Demeyer K."/>
            <person name="Hole K."/>
            <person name="Larrea E."/>
            <person name="Timmerman E."/>
            <person name="Prieto J."/>
            <person name="Arnesen T."/>
            <person name="Sherman F."/>
            <person name="Gevaert K."/>
            <person name="Aldabe R."/>
        </authorList>
    </citation>
    <scope>IDENTIFICATION BY MASS SPECTROMETRY [LARGE SCALE ANALYSIS]</scope>
</reference>
<reference key="19">
    <citation type="journal article" date="2013" name="J. Proteome Res.">
        <title>Toward a comprehensive characterization of a human cancer cell phosphoproteome.</title>
        <authorList>
            <person name="Zhou H."/>
            <person name="Di Palma S."/>
            <person name="Preisinger C."/>
            <person name="Peng M."/>
            <person name="Polat A.N."/>
            <person name="Heck A.J."/>
            <person name="Mohammed S."/>
        </authorList>
    </citation>
    <scope>PHOSPHORYLATION [LARGE SCALE ANALYSIS] AT SER-332; SER-335; SER-337; SER-350; SER-380; SER-382; SER-390; SER-412 AND SER-442</scope>
    <scope>IDENTIFICATION BY MASS SPECTROMETRY [LARGE SCALE ANALYSIS]</scope>
    <source>
        <tissue>Cervix carcinoma</tissue>
        <tissue>Erythroleukemia</tissue>
    </source>
</reference>
<reference key="20">
    <citation type="journal article" date="2007" name="Nature">
        <title>Patterns of somatic mutation in human cancer genomes.</title>
        <authorList>
            <person name="Greenman C."/>
            <person name="Stephens P."/>
            <person name="Smith R."/>
            <person name="Dalgliesh G.L."/>
            <person name="Hunter C."/>
            <person name="Bignell G."/>
            <person name="Davies H."/>
            <person name="Teague J."/>
            <person name="Butler A."/>
            <person name="Stevens C."/>
            <person name="Edkins S."/>
            <person name="O'Meara S."/>
            <person name="Vastrik I."/>
            <person name="Schmidt E.E."/>
            <person name="Avis T."/>
            <person name="Barthorpe S."/>
            <person name="Bhamra G."/>
            <person name="Buck G."/>
            <person name="Choudhury B."/>
            <person name="Clements J."/>
            <person name="Cole J."/>
            <person name="Dicks E."/>
            <person name="Forbes S."/>
            <person name="Gray K."/>
            <person name="Halliday K."/>
            <person name="Harrison R."/>
            <person name="Hills K."/>
            <person name="Hinton J."/>
            <person name="Jenkinson A."/>
            <person name="Jones D."/>
            <person name="Menzies A."/>
            <person name="Mironenko T."/>
            <person name="Perry J."/>
            <person name="Raine K."/>
            <person name="Richardson D."/>
            <person name="Shepherd R."/>
            <person name="Small A."/>
            <person name="Tofts C."/>
            <person name="Varian J."/>
            <person name="Webb T."/>
            <person name="West S."/>
            <person name="Widaa S."/>
            <person name="Yates A."/>
            <person name="Cahill D.P."/>
            <person name="Louis D.N."/>
            <person name="Goldstraw P."/>
            <person name="Nicholson A.G."/>
            <person name="Brasseur F."/>
            <person name="Looijenga L."/>
            <person name="Weber B.L."/>
            <person name="Chiew Y.-E."/>
            <person name="DeFazio A."/>
            <person name="Greaves M.F."/>
            <person name="Green A.R."/>
            <person name="Campbell P."/>
            <person name="Birney E."/>
            <person name="Easton D.F."/>
            <person name="Chenevix-Trench G."/>
            <person name="Tan M.-H."/>
            <person name="Khoo S.K."/>
            <person name="Teh B.T."/>
            <person name="Yuen S.T."/>
            <person name="Leung S.Y."/>
            <person name="Wooster R."/>
            <person name="Futreal P.A."/>
            <person name="Stratton M.R."/>
        </authorList>
    </citation>
    <scope>VARIANTS [LARGE SCALE ANALYSIS] CYS-96; ARG-144; HIS-155; ILE-175; THR-216; VAL-244; ARG-349; SER-397; ASP-409 AND HIS-507</scope>
</reference>
<keyword id="KW-0002">3D-structure</keyword>
<keyword id="KW-0025">Alternative splicing</keyword>
<keyword id="KW-0067">ATP-binding</keyword>
<keyword id="KW-0131">Cell cycle</keyword>
<keyword id="KW-0963">Cytoplasm</keyword>
<keyword id="KW-0418">Kinase</keyword>
<keyword id="KW-0460">Magnesium</keyword>
<keyword id="KW-0479">Metal-binding</keyword>
<keyword id="KW-0547">Nucleotide-binding</keyword>
<keyword id="KW-0597">Phosphoprotein</keyword>
<keyword id="KW-1267">Proteomics identification</keyword>
<keyword id="KW-1185">Reference proteome</keyword>
<keyword id="KW-0690">Ribosome biogenesis</keyword>
<keyword id="KW-0723">Serine/threonine-protein kinase</keyword>
<keyword id="KW-0808">Transferase</keyword>
<evidence type="ECO:0000250" key="1"/>
<evidence type="ECO:0000269" key="2">
    <source>
    </source>
</evidence>
<evidence type="ECO:0000269" key="3">
    <source>
    </source>
</evidence>
<evidence type="ECO:0000269" key="4">
    <source>
    </source>
</evidence>
<evidence type="ECO:0000269" key="5">
    <source>
    </source>
</evidence>
<evidence type="ECO:0000269" key="6">
    <source>
    </source>
</evidence>
<evidence type="ECO:0000269" key="7">
    <source>
    </source>
</evidence>
<evidence type="ECO:0000303" key="8">
    <source>
    </source>
</evidence>
<evidence type="ECO:0000303" key="9">
    <source ref="2"/>
</evidence>
<evidence type="ECO:0000305" key="10"/>
<evidence type="ECO:0000312" key="11">
    <source>
        <dbReference type="HGNC" id="HGNC:18999"/>
    </source>
</evidence>
<evidence type="ECO:0007744" key="12">
    <source>
    </source>
</evidence>
<evidence type="ECO:0007744" key="13">
    <source>
    </source>
</evidence>
<evidence type="ECO:0007744" key="14">
    <source>
    </source>
</evidence>
<evidence type="ECO:0007744" key="15">
    <source>
    </source>
</evidence>
<evidence type="ECO:0007744" key="16">
    <source>
    </source>
</evidence>
<evidence type="ECO:0007744" key="17">
    <source>
    </source>
</evidence>
<evidence type="ECO:0007744" key="18">
    <source>
    </source>
</evidence>
<evidence type="ECO:0007744" key="19">
    <source>
    </source>
</evidence>
<evidence type="ECO:0007829" key="20">
    <source>
        <dbReference type="PDB" id="5DHF"/>
    </source>
</evidence>
<evidence type="ECO:0007829" key="21">
    <source>
        <dbReference type="PDB" id="6FDM"/>
    </source>
</evidence>
<evidence type="ECO:0007829" key="22">
    <source>
        <dbReference type="PDB" id="6HK6"/>
    </source>
</evidence>
<evidence type="ECO:0007829" key="23">
    <source>
        <dbReference type="PDB" id="7VBT"/>
    </source>
</evidence>
<evidence type="ECO:0007829" key="24">
    <source>
        <dbReference type="PDB" id="7WU0"/>
    </source>
</evidence>
<name>RIOK2_HUMAN</name>
<protein>
    <recommendedName>
        <fullName>Serine/threonine-protein kinase RIO2</fullName>
        <ecNumber evidence="6 7">2.7.11.1</ecNumber>
    </recommendedName>
    <alternativeName>
        <fullName>RIO kinase 2</fullName>
    </alternativeName>
</protein>
<comment type="function">
    <text evidence="4 6 7">Serine/threonine-protein kinase involved in the final steps of cytoplasmic maturation of the 40S ribosomal subunit. Involved in export of the 40S pre-ribosome particles (pre-40S) from the nucleus to the cytoplasm. Its kinase activity is required for the release of NOB1, PNO1 and LTV1 from the late pre-40S and the processing of 18S-E pre-rRNA to the mature 18S rRNA (PubMed:19564402). Regulates the timing of the metaphase-anaphase transition during mitotic progression, and its phosphorylation, most likely by PLK1, regulates this function (PubMed:21880710).</text>
</comment>
<comment type="catalytic activity">
    <reaction evidence="6 7">
        <text>L-seryl-[protein] + ATP = O-phospho-L-seryl-[protein] + ADP + H(+)</text>
        <dbReference type="Rhea" id="RHEA:17989"/>
        <dbReference type="Rhea" id="RHEA-COMP:9863"/>
        <dbReference type="Rhea" id="RHEA-COMP:11604"/>
        <dbReference type="ChEBI" id="CHEBI:15378"/>
        <dbReference type="ChEBI" id="CHEBI:29999"/>
        <dbReference type="ChEBI" id="CHEBI:30616"/>
        <dbReference type="ChEBI" id="CHEBI:83421"/>
        <dbReference type="ChEBI" id="CHEBI:456216"/>
        <dbReference type="EC" id="2.7.11.1"/>
    </reaction>
</comment>
<comment type="catalytic activity">
    <reaction evidence="6 7">
        <text>L-threonyl-[protein] + ATP = O-phospho-L-threonyl-[protein] + ADP + H(+)</text>
        <dbReference type="Rhea" id="RHEA:46608"/>
        <dbReference type="Rhea" id="RHEA-COMP:11060"/>
        <dbReference type="Rhea" id="RHEA-COMP:11605"/>
        <dbReference type="ChEBI" id="CHEBI:15378"/>
        <dbReference type="ChEBI" id="CHEBI:30013"/>
        <dbReference type="ChEBI" id="CHEBI:30616"/>
        <dbReference type="ChEBI" id="CHEBI:61977"/>
        <dbReference type="ChEBI" id="CHEBI:456216"/>
        <dbReference type="EC" id="2.7.11.1"/>
    </reaction>
</comment>
<comment type="cofactor">
    <cofactor evidence="10">
        <name>Mg(2+)</name>
        <dbReference type="ChEBI" id="CHEBI:18420"/>
    </cofactor>
</comment>
<comment type="subunit">
    <text evidence="4 7">Associated with late 40S pre-ribosomal particles (PubMed:16037817, PubMed:21081503). Interacts with PLK1 (via its N-terminus) (PubMed:21880710).</text>
</comment>
<comment type="subcellular location">
    <subcellularLocation>
        <location evidence="4 6">Cytoplasm</location>
    </subcellularLocation>
    <text evidence="6">Exported out of the nucleus via its NES in a XPO1-dependent manner.</text>
</comment>
<comment type="alternative products">
    <event type="alternative splicing"/>
    <isoform>
        <id>Q9BVS4-1</id>
        <name>1</name>
        <sequence type="displayed"/>
    </isoform>
    <isoform>
        <id>Q9BVS4-2</id>
        <name>2</name>
        <sequence type="described" ref="VSP_046388"/>
    </isoform>
</comment>
<comment type="PTM">
    <text evidence="6 7">Autophosphorylated (in vitro) (PubMed:19564402, PubMed:21880710). Phosphorylation at Ser-335, Ser-380, Ser-548 by PLK1 affects the timing of the metaphase-anaphase transition (PubMed:21880710).</text>
</comment>
<comment type="similarity">
    <text evidence="10">Belongs to the protein kinase superfamily. RIO-type Ser/Thr kinase family.</text>
</comment>
<dbReference type="EC" id="2.7.11.1" evidence="6 7"/>
<dbReference type="EMBL" id="AK002021">
    <property type="protein sequence ID" value="BAA92040.1"/>
    <property type="molecule type" value="mRNA"/>
</dbReference>
<dbReference type="EMBL" id="AK225348">
    <property type="status" value="NOT_ANNOTATED_CDS"/>
    <property type="molecule type" value="mRNA"/>
</dbReference>
<dbReference type="EMBL" id="AC008865">
    <property type="status" value="NOT_ANNOTATED_CDS"/>
    <property type="molecule type" value="Genomic_DNA"/>
</dbReference>
<dbReference type="EMBL" id="AC008883">
    <property type="status" value="NOT_ANNOTATED_CDS"/>
    <property type="molecule type" value="Genomic_DNA"/>
</dbReference>
<dbReference type="EMBL" id="BC000953">
    <property type="protein sequence ID" value="AAH00953.1"/>
    <property type="molecule type" value="mRNA"/>
</dbReference>
<dbReference type="CCDS" id="CCDS4089.1">
    <molecule id="Q9BVS4-1"/>
</dbReference>
<dbReference type="CCDS" id="CCDS54884.1">
    <molecule id="Q9BVS4-2"/>
</dbReference>
<dbReference type="RefSeq" id="NP_001153221.1">
    <molecule id="Q9BVS4-2"/>
    <property type="nucleotide sequence ID" value="NM_001159749.2"/>
</dbReference>
<dbReference type="RefSeq" id="NP_060813.2">
    <molecule id="Q9BVS4-1"/>
    <property type="nucleotide sequence ID" value="NM_018343.3"/>
</dbReference>
<dbReference type="PDB" id="5DHF">
    <property type="method" value="X-ray"/>
    <property type="resolution" value="2.29 A"/>
    <property type="chains" value="D=389-403"/>
</dbReference>
<dbReference type="PDB" id="6FDM">
    <property type="method" value="X-ray"/>
    <property type="resolution" value="2.10 A"/>
    <property type="chains" value="A/B/C/D=1-313"/>
</dbReference>
<dbReference type="PDB" id="6FDN">
    <property type="method" value="X-ray"/>
    <property type="resolution" value="2.90 A"/>
    <property type="chains" value="A/B=1-320"/>
</dbReference>
<dbReference type="PDB" id="6FDO">
    <property type="method" value="X-ray"/>
    <property type="resolution" value="2.60 A"/>
    <property type="chains" value="A/B=1-353"/>
</dbReference>
<dbReference type="PDB" id="6G18">
    <property type="method" value="EM"/>
    <property type="resolution" value="3.60 A"/>
    <property type="chains" value="v=1-552"/>
</dbReference>
<dbReference type="PDB" id="6G51">
    <property type="method" value="EM"/>
    <property type="resolution" value="4.10 A"/>
    <property type="chains" value="v=1-552"/>
</dbReference>
<dbReference type="PDB" id="6HK6">
    <property type="method" value="X-ray"/>
    <property type="resolution" value="2.35 A"/>
    <property type="chains" value="A/B/C/D/E/F/G/H/I/J=1-329"/>
</dbReference>
<dbReference type="PDB" id="7VBT">
    <property type="method" value="X-ray"/>
    <property type="resolution" value="2.54 A"/>
    <property type="chains" value="A/B=1-319"/>
</dbReference>
<dbReference type="PDB" id="7WU0">
    <property type="method" value="EM"/>
    <property type="resolution" value="3.30 A"/>
    <property type="chains" value="v=1-552"/>
</dbReference>
<dbReference type="PDB" id="9F81">
    <property type="method" value="X-ray"/>
    <property type="resolution" value="3.02 A"/>
    <property type="chains" value="A/G=1-329"/>
</dbReference>
<dbReference type="PDBsum" id="5DHF"/>
<dbReference type="PDBsum" id="6FDM"/>
<dbReference type="PDBsum" id="6FDN"/>
<dbReference type="PDBsum" id="6FDO"/>
<dbReference type="PDBsum" id="6G18"/>
<dbReference type="PDBsum" id="6G51"/>
<dbReference type="PDBsum" id="6HK6"/>
<dbReference type="PDBsum" id="7VBT"/>
<dbReference type="PDBsum" id="7WU0"/>
<dbReference type="PDBsum" id="9F81"/>
<dbReference type="EMDB" id="EMD-32807"/>
<dbReference type="EMDB" id="EMD-4337"/>
<dbReference type="EMDB" id="EMD-4350"/>
<dbReference type="SMR" id="Q9BVS4"/>
<dbReference type="BioGRID" id="120896">
    <property type="interactions" value="133"/>
</dbReference>
<dbReference type="FunCoup" id="Q9BVS4">
    <property type="interactions" value="4154"/>
</dbReference>
<dbReference type="IntAct" id="Q9BVS4">
    <property type="interactions" value="93"/>
</dbReference>
<dbReference type="STRING" id="9606.ENSP00000283109"/>
<dbReference type="BindingDB" id="Q9BVS4"/>
<dbReference type="ChEMBL" id="CHEMBL6000"/>
<dbReference type="DrugBank" id="DB12010">
    <property type="generic name" value="Fostamatinib"/>
</dbReference>
<dbReference type="DrugCentral" id="Q9BVS4"/>
<dbReference type="GlyCosmos" id="Q9BVS4">
    <property type="glycosylation" value="1 site, 1 glycan"/>
</dbReference>
<dbReference type="GlyGen" id="Q9BVS4">
    <property type="glycosylation" value="1 site, 1 O-linked glycan (1 site)"/>
</dbReference>
<dbReference type="iPTMnet" id="Q9BVS4"/>
<dbReference type="PhosphoSitePlus" id="Q9BVS4"/>
<dbReference type="BioMuta" id="RIOK2"/>
<dbReference type="DMDM" id="143811448"/>
<dbReference type="CPTAC" id="non-CPTAC-2990"/>
<dbReference type="jPOST" id="Q9BVS4"/>
<dbReference type="MassIVE" id="Q9BVS4"/>
<dbReference type="PaxDb" id="9606-ENSP00000283109"/>
<dbReference type="PeptideAtlas" id="Q9BVS4"/>
<dbReference type="ProteomicsDB" id="14107"/>
<dbReference type="ProteomicsDB" id="79230">
    <molecule id="Q9BVS4-1"/>
</dbReference>
<dbReference type="Pumba" id="Q9BVS4"/>
<dbReference type="Antibodypedia" id="13276">
    <property type="antibodies" value="347 antibodies from 28 providers"/>
</dbReference>
<dbReference type="DNASU" id="55781"/>
<dbReference type="Ensembl" id="ENST00000283109.8">
    <molecule id="Q9BVS4-1"/>
    <property type="protein sequence ID" value="ENSP00000283109.3"/>
    <property type="gene ID" value="ENSG00000058729.11"/>
</dbReference>
<dbReference type="Ensembl" id="ENST00000508447.1">
    <molecule id="Q9BVS4-2"/>
    <property type="protein sequence ID" value="ENSP00000420932.1"/>
    <property type="gene ID" value="ENSG00000058729.11"/>
</dbReference>
<dbReference type="GeneID" id="55781"/>
<dbReference type="KEGG" id="hsa:55781"/>
<dbReference type="MANE-Select" id="ENST00000283109.8">
    <property type="protein sequence ID" value="ENSP00000283109.3"/>
    <property type="RefSeq nucleotide sequence ID" value="NM_018343.3"/>
    <property type="RefSeq protein sequence ID" value="NP_060813.2"/>
</dbReference>
<dbReference type="UCSC" id="uc003kmz.4">
    <molecule id="Q9BVS4-1"/>
    <property type="organism name" value="human"/>
</dbReference>
<dbReference type="AGR" id="HGNC:18999"/>
<dbReference type="CTD" id="55781"/>
<dbReference type="DisGeNET" id="55781"/>
<dbReference type="GeneCards" id="RIOK2"/>
<dbReference type="HGNC" id="HGNC:18999">
    <property type="gene designation" value="RIOK2"/>
</dbReference>
<dbReference type="HPA" id="ENSG00000058729">
    <property type="expression patterns" value="Low tissue specificity"/>
</dbReference>
<dbReference type="MIM" id="617754">
    <property type="type" value="gene"/>
</dbReference>
<dbReference type="neXtProt" id="NX_Q9BVS4"/>
<dbReference type="OpenTargets" id="ENSG00000058729"/>
<dbReference type="PharmGKB" id="PA134885533"/>
<dbReference type="VEuPathDB" id="HostDB:ENSG00000058729"/>
<dbReference type="eggNOG" id="KOG2268">
    <property type="taxonomic scope" value="Eukaryota"/>
</dbReference>
<dbReference type="GeneTree" id="ENSGT00390000003255"/>
<dbReference type="HOGENOM" id="CLU_018693_0_3_1"/>
<dbReference type="InParanoid" id="Q9BVS4"/>
<dbReference type="OMA" id="ACPHLIA"/>
<dbReference type="OrthoDB" id="10258631at2759"/>
<dbReference type="PAN-GO" id="Q9BVS4">
    <property type="GO annotations" value="5 GO annotations based on evolutionary models"/>
</dbReference>
<dbReference type="PhylomeDB" id="Q9BVS4"/>
<dbReference type="TreeFam" id="TF321400"/>
<dbReference type="PathwayCommons" id="Q9BVS4"/>
<dbReference type="Reactome" id="R-HSA-6791226">
    <property type="pathway name" value="Major pathway of rRNA processing in the nucleolus and cytosol"/>
</dbReference>
<dbReference type="SignaLink" id="Q9BVS4"/>
<dbReference type="SIGNOR" id="Q9BVS4"/>
<dbReference type="BioGRID-ORCS" id="55781">
    <property type="hits" value="808 hits in 1202 CRISPR screens"/>
</dbReference>
<dbReference type="ChiTaRS" id="RIOK2">
    <property type="organism name" value="human"/>
</dbReference>
<dbReference type="EvolutionaryTrace" id="Q9BVS4"/>
<dbReference type="GenomeRNAi" id="55781"/>
<dbReference type="Pharos" id="Q9BVS4">
    <property type="development level" value="Tbio"/>
</dbReference>
<dbReference type="PRO" id="PR:Q9BVS4"/>
<dbReference type="Proteomes" id="UP000005640">
    <property type="component" value="Chromosome 5"/>
</dbReference>
<dbReference type="RNAct" id="Q9BVS4">
    <property type="molecule type" value="protein"/>
</dbReference>
<dbReference type="Bgee" id="ENSG00000058729">
    <property type="expression patterns" value="Expressed in oocyte and 181 other cell types or tissues"/>
</dbReference>
<dbReference type="ExpressionAtlas" id="Q9BVS4">
    <property type="expression patterns" value="baseline and differential"/>
</dbReference>
<dbReference type="GO" id="GO:0005737">
    <property type="term" value="C:cytoplasm"/>
    <property type="evidence" value="ECO:0000315"/>
    <property type="project" value="UniProtKB"/>
</dbReference>
<dbReference type="GO" id="GO:0005829">
    <property type="term" value="C:cytosol"/>
    <property type="evidence" value="ECO:0000318"/>
    <property type="project" value="GO_Central"/>
</dbReference>
<dbReference type="GO" id="GO:0005654">
    <property type="term" value="C:nucleoplasm"/>
    <property type="evidence" value="ECO:0000304"/>
    <property type="project" value="Reactome"/>
</dbReference>
<dbReference type="GO" id="GO:0005634">
    <property type="term" value="C:nucleus"/>
    <property type="evidence" value="ECO:0000318"/>
    <property type="project" value="GO_Central"/>
</dbReference>
<dbReference type="GO" id="GO:0030688">
    <property type="term" value="C:preribosome, small subunit precursor"/>
    <property type="evidence" value="ECO:0000314"/>
    <property type="project" value="UniProtKB"/>
</dbReference>
<dbReference type="GO" id="GO:0005524">
    <property type="term" value="F:ATP binding"/>
    <property type="evidence" value="ECO:0007669"/>
    <property type="project" value="UniProtKB-KW"/>
</dbReference>
<dbReference type="GO" id="GO:0046872">
    <property type="term" value="F:metal ion binding"/>
    <property type="evidence" value="ECO:0007669"/>
    <property type="project" value="UniProtKB-KW"/>
</dbReference>
<dbReference type="GO" id="GO:0004672">
    <property type="term" value="F:protein kinase activity"/>
    <property type="evidence" value="ECO:0000318"/>
    <property type="project" value="GO_Central"/>
</dbReference>
<dbReference type="GO" id="GO:0106310">
    <property type="term" value="F:protein serine kinase activity"/>
    <property type="evidence" value="ECO:0007669"/>
    <property type="project" value="RHEA"/>
</dbReference>
<dbReference type="GO" id="GO:0004674">
    <property type="term" value="F:protein serine/threonine kinase activity"/>
    <property type="evidence" value="ECO:0007669"/>
    <property type="project" value="UniProtKB-KW"/>
</dbReference>
<dbReference type="GO" id="GO:0030490">
    <property type="term" value="P:maturation of SSU-rRNA"/>
    <property type="evidence" value="ECO:0000315"/>
    <property type="project" value="UniProtKB"/>
</dbReference>
<dbReference type="GO" id="GO:2000208">
    <property type="term" value="P:positive regulation of ribosomal small subunit export from nucleus"/>
    <property type="evidence" value="ECO:0000315"/>
    <property type="project" value="UniProtKB"/>
</dbReference>
<dbReference type="GO" id="GO:2000234">
    <property type="term" value="P:positive regulation of rRNA processing"/>
    <property type="evidence" value="ECO:0000314"/>
    <property type="project" value="UniProtKB"/>
</dbReference>
<dbReference type="GO" id="GO:0046777">
    <property type="term" value="P:protein autophosphorylation"/>
    <property type="evidence" value="ECO:0000315"/>
    <property type="project" value="UniProtKB"/>
</dbReference>
<dbReference type="GO" id="GO:0030071">
    <property type="term" value="P:regulation of mitotic metaphase/anaphase transition"/>
    <property type="evidence" value="ECO:0000315"/>
    <property type="project" value="UniProtKB"/>
</dbReference>
<dbReference type="GO" id="GO:0042274">
    <property type="term" value="P:ribosomal small subunit biogenesis"/>
    <property type="evidence" value="ECO:0000315"/>
    <property type="project" value="UniProtKB"/>
</dbReference>
<dbReference type="CDD" id="cd05144">
    <property type="entry name" value="RIO2_C"/>
    <property type="match status" value="1"/>
</dbReference>
<dbReference type="FunFam" id="1.10.10.10:FF:000053">
    <property type="entry name" value="Serine/threonine-protein kinase RIO2"/>
    <property type="match status" value="1"/>
</dbReference>
<dbReference type="FunFam" id="1.10.510.10:FF:000307">
    <property type="entry name" value="Serine/threonine-protein kinase RIO2"/>
    <property type="match status" value="1"/>
</dbReference>
<dbReference type="FunFam" id="3.30.200.20:FF:000052">
    <property type="entry name" value="Serine/threonine-protein kinase RIO2"/>
    <property type="match status" value="1"/>
</dbReference>
<dbReference type="Gene3D" id="3.30.200.20">
    <property type="entry name" value="Phosphorylase Kinase, domain 1"/>
    <property type="match status" value="1"/>
</dbReference>
<dbReference type="Gene3D" id="1.10.510.10">
    <property type="entry name" value="Transferase(Phosphotransferase) domain 1"/>
    <property type="match status" value="1"/>
</dbReference>
<dbReference type="Gene3D" id="1.10.10.10">
    <property type="entry name" value="Winged helix-like DNA-binding domain superfamily/Winged helix DNA-binding domain"/>
    <property type="match status" value="1"/>
</dbReference>
<dbReference type="InterPro" id="IPR011009">
    <property type="entry name" value="Kinase-like_dom_sf"/>
</dbReference>
<dbReference type="InterPro" id="IPR030484">
    <property type="entry name" value="Rio2"/>
</dbReference>
<dbReference type="InterPro" id="IPR015285">
    <property type="entry name" value="RIO2_wHTH_N"/>
</dbReference>
<dbReference type="InterPro" id="IPR018934">
    <property type="entry name" value="RIO_dom"/>
</dbReference>
<dbReference type="InterPro" id="IPR000687">
    <property type="entry name" value="RIO_kinase"/>
</dbReference>
<dbReference type="InterPro" id="IPR018935">
    <property type="entry name" value="RIO_kinase_CS"/>
</dbReference>
<dbReference type="InterPro" id="IPR036388">
    <property type="entry name" value="WH-like_DNA-bd_sf"/>
</dbReference>
<dbReference type="InterPro" id="IPR036390">
    <property type="entry name" value="WH_DNA-bd_sf"/>
</dbReference>
<dbReference type="PANTHER" id="PTHR45852">
    <property type="entry name" value="SER/THR-PROTEIN KINASE RIO2"/>
    <property type="match status" value="1"/>
</dbReference>
<dbReference type="PANTHER" id="PTHR45852:SF1">
    <property type="entry name" value="SERINE_THREONINE-PROTEIN KINASE RIO2"/>
    <property type="match status" value="1"/>
</dbReference>
<dbReference type="Pfam" id="PF01163">
    <property type="entry name" value="RIO1"/>
    <property type="match status" value="1"/>
</dbReference>
<dbReference type="Pfam" id="PF09202">
    <property type="entry name" value="Rio2_N"/>
    <property type="match status" value="1"/>
</dbReference>
<dbReference type="SMART" id="SM00090">
    <property type="entry name" value="RIO"/>
    <property type="match status" value="1"/>
</dbReference>
<dbReference type="SUPFAM" id="SSF56112">
    <property type="entry name" value="Protein kinase-like (PK-like)"/>
    <property type="match status" value="1"/>
</dbReference>
<dbReference type="SUPFAM" id="SSF46785">
    <property type="entry name" value="Winged helix' DNA-binding domain"/>
    <property type="match status" value="1"/>
</dbReference>
<dbReference type="PROSITE" id="PS01245">
    <property type="entry name" value="RIO1"/>
    <property type="match status" value="1"/>
</dbReference>
<accession>Q9BVS4</accession>
<accession>D6RDI3</accession>
<accession>Q9NUT0</accession>
<organism>
    <name type="scientific">Homo sapiens</name>
    <name type="common">Human</name>
    <dbReference type="NCBI Taxonomy" id="9606"/>
    <lineage>
        <taxon>Eukaryota</taxon>
        <taxon>Metazoa</taxon>
        <taxon>Chordata</taxon>
        <taxon>Craniata</taxon>
        <taxon>Vertebrata</taxon>
        <taxon>Euteleostomi</taxon>
        <taxon>Mammalia</taxon>
        <taxon>Eutheria</taxon>
        <taxon>Euarchontoglires</taxon>
        <taxon>Primates</taxon>
        <taxon>Haplorrhini</taxon>
        <taxon>Catarrhini</taxon>
        <taxon>Hominidae</taxon>
        <taxon>Homo</taxon>
    </lineage>
</organism>
<sequence length="552" mass="63283">MGKVNVAKLRYMSRDDFRVLTAVEMGMKNHEIVPGSLIASIASLKHGGCNKVLRELVKHKLIAWERTKTVQGYRLTNAGYDYLALKTLSSRQVVESVGNQMGVGKESDIYIVANEEGQQFALKLHRLGRTSFRNLKNKRDYHKHRHNVSWLYLSRLSAMKEFAYMKALYERKFPVPKPIDYNRHAVVMELINGYPLCQIHHVEDPASVYDEAMELIVKLANHGLIHGDFNEFNLILDESDHITMIDFPQMVSTSHPNAEWYFDRDVKCIKDFFMKRFSYESELFPTFKDIRREDTLDVEVSASGYTKEMQADDELLHPLGPDDKNIETKEGSEFSFSDGEVAEKAEVYGSENESERNCLEESEGCYCRSSGDPEQIKEDSLSEESADARSFEMTEFNQALEEIKGQVVENNSVTEFSEEKNRTENYNRQDGQRVQGGVPAGSDEYEDECPHLIALSSLNREFRPFRDEENVGAMNQYRTRTLSITSSGSAVSCSTIPPELVKQKVKRQLTKQQKSAVRRRLQKGEANIFTKQRRENMQNIKSSLEAASFWGE</sequence>
<feature type="chain" id="PRO_0000213527" description="Serine/threonine-protein kinase RIO2">
    <location>
        <begin position="1"/>
        <end position="552"/>
    </location>
</feature>
<feature type="domain" description="Protein kinase" evidence="10">
    <location>
        <begin position="97"/>
        <end position="272"/>
    </location>
</feature>
<feature type="short sequence motif" description="Nuclear export signal" evidence="6">
    <location>
        <begin position="399"/>
        <end position="408"/>
    </location>
</feature>
<feature type="active site" description="Proton acceptor" evidence="1">
    <location>
        <position position="228"/>
    </location>
</feature>
<feature type="binding site" evidence="1">
    <location>
        <position position="123"/>
    </location>
    <ligand>
        <name>ATP</name>
        <dbReference type="ChEBI" id="CHEBI:30616"/>
    </ligand>
</feature>
<feature type="modified residue" description="Phosphoserine" evidence="14 15 16 17 19">
    <location>
        <position position="332"/>
    </location>
</feature>
<feature type="modified residue" description="Phosphoserine" evidence="7 14 15 16 17 19">
    <location>
        <position position="335"/>
    </location>
</feature>
<feature type="modified residue" description="Phosphoserine" evidence="14 15 16 17 18 19">
    <location>
        <position position="337"/>
    </location>
</feature>
<feature type="modified residue" description="Phosphoserine" evidence="13 19">
    <location>
        <position position="350"/>
    </location>
</feature>
<feature type="modified residue" description="Phosphoserine" evidence="15">
    <location>
        <position position="362"/>
    </location>
</feature>
<feature type="modified residue" description="Phosphoserine" evidence="7 13 16 19">
    <location>
        <position position="380"/>
    </location>
</feature>
<feature type="modified residue" description="Phosphoserine" evidence="13 16 19">
    <location>
        <position position="382"/>
    </location>
</feature>
<feature type="modified residue" description="Phosphoserine" evidence="13 15 16">
    <location>
        <position position="385"/>
    </location>
</feature>
<feature type="modified residue" description="Phosphoserine" evidence="12 14 15 16 19">
    <location>
        <position position="390"/>
    </location>
</feature>
<feature type="modified residue" description="Phosphoserine" evidence="17 19">
    <location>
        <position position="412"/>
    </location>
</feature>
<feature type="modified residue" description="Phosphoserine" evidence="14">
    <location>
        <position position="417"/>
    </location>
</feature>
<feature type="modified residue" description="Phosphoserine" evidence="13 14 15 19">
    <location>
        <position position="442"/>
    </location>
</feature>
<feature type="modified residue" description="Phosphotyrosine" evidence="15">
    <location>
        <position position="445"/>
    </location>
</feature>
<feature type="modified residue" description="Phosphoserine" evidence="7">
    <location>
        <position position="548"/>
    </location>
</feature>
<feature type="splice variant" id="VSP_046388" description="In isoform 2." evidence="9">
    <original>DEENVGAMNQYRTRTLSITSSGSAVSCSTIPPELVKQKVKRQLTKQQKSAVRRRLQKGEANIFTKQRRENMQNIKSSLEAASFWGE</original>
    <variation>YRLLSIAF</variation>
    <location>
        <begin position="467"/>
        <end position="552"/>
    </location>
</feature>
<feature type="sequence variant" id="VAR_042347" description="In dbSNP:rs2544773." evidence="5">
    <original>S</original>
    <variation>C</variation>
    <location>
        <position position="96"/>
    </location>
</feature>
<feature type="sequence variant" id="VAR_042348" description="In dbSNP:rs35165987." evidence="5">
    <original>H</original>
    <variation>R</variation>
    <location>
        <position position="144"/>
    </location>
</feature>
<feature type="sequence variant" id="VAR_031597" description="In dbSNP:rs17849382." evidence="3">
    <original>H</original>
    <variation>Y</variation>
    <location>
        <position position="144"/>
    </location>
</feature>
<feature type="sequence variant" id="VAR_042349" description="In dbSNP:rs34916955." evidence="5">
    <original>R</original>
    <variation>H</variation>
    <location>
        <position position="155"/>
    </location>
</feature>
<feature type="sequence variant" id="VAR_042350" description="In dbSNP:rs35713904." evidence="5">
    <original>V</original>
    <variation>I</variation>
    <location>
        <position position="175"/>
    </location>
</feature>
<feature type="sequence variant" id="VAR_042351" description="In a renal clear cell carcinoma sample; somatic mutation; dbSNP:rs147608663." evidence="5">
    <original>I</original>
    <variation>T</variation>
    <location>
        <position position="216"/>
    </location>
</feature>
<feature type="sequence variant" id="VAR_042352" description="In dbSNP:rs33996030." evidence="5">
    <original>M</original>
    <variation>V</variation>
    <location>
        <position position="244"/>
    </location>
</feature>
<feature type="sequence variant" id="VAR_031598" description="In dbSNP:rs160632." evidence="2 5">
    <original>G</original>
    <variation>R</variation>
    <location>
        <position position="349"/>
    </location>
</feature>
<feature type="sequence variant" id="VAR_031599" description="In dbSNP:rs12188395." evidence="5">
    <original>N</original>
    <variation>S</variation>
    <location>
        <position position="397"/>
    </location>
</feature>
<feature type="sequence variant" id="VAR_042353" description="In dbSNP:rs35829000." evidence="5">
    <original>E</original>
    <variation>D</variation>
    <location>
        <position position="409"/>
    </location>
</feature>
<feature type="sequence variant" id="VAR_042354" description="In dbSNP:rs34555783." evidence="5">
    <original>R</original>
    <variation>H</variation>
    <location>
        <position position="507"/>
    </location>
</feature>
<feature type="mutagenesis site" description="Abolishes autophosphorylation; impairs release of pre-40S trans-acting factors and rRNA processing; when associated with A-246." evidence="6">
    <original>K</original>
    <variation>A</variation>
    <location>
        <position position="123"/>
    </location>
</feature>
<feature type="mutagenesis site" description="Abolishes autophosphorylation; impairs release of pre-40S trans-acting factors and rRNA processing; when associated with A-123." evidence="6">
    <original>D</original>
    <variation>A</variation>
    <location>
        <position position="246"/>
    </location>
</feature>
<feature type="mutagenesis site" description="Does not affect autophosphorylation activity; when associated with A-380 and A-548. Does not affect the timing of metaphase-anaphase transition; when associated with A-380 and A-548." evidence="7">
    <original>S</original>
    <variation>A</variation>
    <location>
        <position position="335"/>
    </location>
</feature>
<feature type="mutagenesis site" description="Increases time spent in metaphase; when associated with D-380 and D-548." evidence="7">
    <original>S</original>
    <variation>D</variation>
    <location>
        <position position="335"/>
    </location>
</feature>
<feature type="mutagenesis site" description="Does not affect autophosphorylation activity; when associated with A-335 and A-548. Does not affect the timing of metaphase-anaphase transition; when associated with A-335 and A-548." evidence="7">
    <original>S</original>
    <variation>A</variation>
    <location>
        <position position="380"/>
    </location>
</feature>
<feature type="mutagenesis site" description="Increases time spent in metaphase; when associated with D-335 and D-548." evidence="7">
    <original>S</original>
    <variation>D</variation>
    <location>
        <position position="380"/>
    </location>
</feature>
<feature type="mutagenesis site" description="Nuclear relocalization; when associated with A-403." evidence="6">
    <original>L</original>
    <variation>A</variation>
    <location>
        <position position="400"/>
    </location>
</feature>
<feature type="mutagenesis site" description="Nuclear relocalization; when associated with A-400." evidence="6">
    <original>I</original>
    <variation>A</variation>
    <location>
        <position position="403"/>
    </location>
</feature>
<feature type="mutagenesis site" description="Does not affect autophosphorylation activity; when associated with A-335 and A-380. Does not affect the timing of metaphase-anaphase transition; when associated with A-335 and A-380." evidence="7">
    <original>S</original>
    <variation>A</variation>
    <location>
        <position position="548"/>
    </location>
</feature>
<feature type="mutagenesis site" description="Increases time spent in metaphase; when associated with D-335 and D-380." evidence="7">
    <original>S</original>
    <variation>D</variation>
    <location>
        <position position="548"/>
    </location>
</feature>
<feature type="helix" evidence="21">
    <location>
        <begin position="7"/>
        <end position="13"/>
    </location>
</feature>
<feature type="helix" evidence="21">
    <location>
        <begin position="15"/>
        <end position="26"/>
    </location>
</feature>
<feature type="turn" evidence="21">
    <location>
        <begin position="27"/>
        <end position="29"/>
    </location>
</feature>
<feature type="strand" evidence="21">
    <location>
        <begin position="31"/>
        <end position="33"/>
    </location>
</feature>
<feature type="helix" evidence="21">
    <location>
        <begin position="35"/>
        <end position="42"/>
    </location>
</feature>
<feature type="helix" evidence="21">
    <location>
        <begin position="49"/>
        <end position="58"/>
    </location>
</feature>
<feature type="strand" evidence="21">
    <location>
        <begin position="61"/>
        <end position="66"/>
    </location>
</feature>
<feature type="strand" evidence="21">
    <location>
        <begin position="71"/>
        <end position="75"/>
    </location>
</feature>
<feature type="helix" evidence="21">
    <location>
        <begin position="77"/>
        <end position="90"/>
    </location>
</feature>
<feature type="strand" evidence="21">
    <location>
        <begin position="95"/>
        <end position="104"/>
    </location>
</feature>
<feature type="strand" evidence="21">
    <location>
        <begin position="107"/>
        <end position="113"/>
    </location>
</feature>
<feature type="strand" evidence="21">
    <location>
        <begin position="119"/>
        <end position="125"/>
    </location>
</feature>
<feature type="strand" evidence="22">
    <location>
        <begin position="130"/>
        <end position="132"/>
    </location>
</feature>
<feature type="helix" evidence="21">
    <location>
        <begin position="147"/>
        <end position="170"/>
    </location>
</feature>
<feature type="strand" evidence="21">
    <location>
        <begin position="178"/>
        <end position="182"/>
    </location>
</feature>
<feature type="strand" evidence="21">
    <location>
        <begin position="185"/>
        <end position="189"/>
    </location>
</feature>
<feature type="strand" evidence="21">
    <location>
        <begin position="192"/>
        <end position="195"/>
    </location>
</feature>
<feature type="helix" evidence="21">
    <location>
        <begin position="196"/>
        <end position="198"/>
    </location>
</feature>
<feature type="helix" evidence="21">
    <location>
        <begin position="205"/>
        <end position="221"/>
    </location>
</feature>
<feature type="strand" evidence="21">
    <location>
        <begin position="233"/>
        <end position="237"/>
    </location>
</feature>
<feature type="turn" evidence="24">
    <location>
        <begin position="238"/>
        <end position="240"/>
    </location>
</feature>
<feature type="strand" evidence="21">
    <location>
        <begin position="242"/>
        <end position="244"/>
    </location>
</feature>
<feature type="strand" evidence="24">
    <location>
        <begin position="251"/>
        <end position="255"/>
    </location>
</feature>
<feature type="helix" evidence="21">
    <location>
        <begin position="258"/>
        <end position="277"/>
    </location>
</feature>
<feature type="helix" evidence="21">
    <location>
        <begin position="287"/>
        <end position="289"/>
    </location>
</feature>
<feature type="strand" evidence="24">
    <location>
        <begin position="291"/>
        <end position="293"/>
    </location>
</feature>
<feature type="helix" evidence="21">
    <location>
        <begin position="298"/>
        <end position="311"/>
    </location>
</feature>
<feature type="helix" evidence="23">
    <location>
        <begin position="314"/>
        <end position="316"/>
    </location>
</feature>
<feature type="helix" evidence="20">
    <location>
        <begin position="394"/>
        <end position="400"/>
    </location>
</feature>
<feature type="helix" evidence="24">
    <location>
        <begin position="498"/>
        <end position="521"/>
    </location>
</feature>
<feature type="helix" evidence="24">
    <location>
        <begin position="527"/>
        <end position="543"/>
    </location>
</feature>
<gene>
    <name evidence="11" type="primary">RIOK2</name>
    <name evidence="8" type="synonym">RIO2</name>
</gene>